<keyword id="KW-0025">Alternative splicing</keyword>
<keyword id="KW-1003">Cell membrane</keyword>
<keyword id="KW-0225">Disease variant</keyword>
<keyword id="KW-0256">Endoplasmic reticulum</keyword>
<keyword id="KW-0472">Membrane</keyword>
<keyword id="KW-0560">Oxidoreductase</keyword>
<keyword id="KW-1267">Proteomics identification</keyword>
<keyword id="KW-1185">Reference proteome</keyword>
<keyword id="KW-0712">Selenocysteine</keyword>
<keyword id="KW-0893">Thyroid hormones biosynthesis</keyword>
<keyword id="KW-0812">Transmembrane</keyword>
<keyword id="KW-1133">Transmembrane helix</keyword>
<protein>
    <recommendedName>
        <fullName>Type I iodothyronine deiodinase</fullName>
        <ecNumber evidence="9">1.21.99.3</ecNumber>
        <ecNumber evidence="9">1.21.99.4</ecNumber>
    </recommendedName>
    <alternativeName>
        <fullName>5DI</fullName>
    </alternativeName>
    <alternativeName>
        <fullName>DIOI</fullName>
    </alternativeName>
    <alternativeName>
        <fullName>Type 1 DI</fullName>
    </alternativeName>
    <alternativeName>
        <fullName>Type-I 5'-deiodinase</fullName>
    </alternativeName>
</protein>
<sequence>MGLPQPGLWLKRLWVLLEVAVHVVVGKVLLILFPDRVKRNILAMGEKTGMTRNPHFSHDNWIPTFFSTQYFWFVLKVRWQRLEDTTELGGLAPNCPVVRLSGQRCNIWEFMQGNRPLVLNFGSCTUPSFMFKFDQFKRLIEDFSSIADFLVIYIEEAHASDGWAFKNNMDIRNHQNLQDRLQAAHLLLARSPQCPVVVDTMQNQSSQLYAALPERLYIIQEGRILYKGKSGPWNYNPEEVRAVLEKLHS</sequence>
<dbReference type="EC" id="1.21.99.3" evidence="9"/>
<dbReference type="EC" id="1.21.99.4" evidence="9"/>
<dbReference type="EMBL" id="S48220">
    <property type="protein sequence ID" value="AAB23670.2"/>
    <property type="molecule type" value="mRNA"/>
</dbReference>
<dbReference type="EMBL" id="AY560374">
    <property type="protein sequence ID" value="AAT02480.1"/>
    <property type="molecule type" value="mRNA"/>
</dbReference>
<dbReference type="EMBL" id="AY560375">
    <property type="protein sequence ID" value="AAT02481.1"/>
    <property type="molecule type" value="mRNA"/>
</dbReference>
<dbReference type="EMBL" id="AY560376">
    <property type="protein sequence ID" value="AAT02482.1"/>
    <property type="molecule type" value="mRNA"/>
</dbReference>
<dbReference type="EMBL" id="AY560377">
    <property type="protein sequence ID" value="AAT02483.1"/>
    <property type="molecule type" value="mRNA"/>
</dbReference>
<dbReference type="EMBL" id="AY560378">
    <property type="protein sequence ID" value="AAT02484.1"/>
    <property type="molecule type" value="mRNA"/>
</dbReference>
<dbReference type="EMBL" id="AY560379">
    <property type="protein sequence ID" value="AAT02485.1"/>
    <property type="molecule type" value="mRNA"/>
</dbReference>
<dbReference type="EMBL" id="AY560380">
    <property type="protein sequence ID" value="AAT02486.1"/>
    <property type="molecule type" value="mRNA"/>
</dbReference>
<dbReference type="EMBL" id="AY560381">
    <property type="protein sequence ID" value="AAT02487.1"/>
    <property type="molecule type" value="mRNA"/>
</dbReference>
<dbReference type="EMBL" id="AY560382">
    <property type="protein sequence ID" value="AAT02488.1"/>
    <property type="molecule type" value="mRNA"/>
</dbReference>
<dbReference type="EMBL" id="AY560383">
    <property type="protein sequence ID" value="AAT02489.1"/>
    <property type="molecule type" value="mRNA"/>
</dbReference>
<dbReference type="EMBL" id="AL031427">
    <property type="status" value="NOT_ANNOTATED_CDS"/>
    <property type="molecule type" value="Genomic_DNA"/>
</dbReference>
<dbReference type="EMBL" id="BC017955">
    <property type="protein sequence ID" value="AAH17955.2"/>
    <property type="molecule type" value="mRNA"/>
</dbReference>
<dbReference type="EMBL" id="BC107170">
    <property type="protein sequence ID" value="AAI07171.1"/>
    <property type="molecule type" value="mRNA"/>
</dbReference>
<dbReference type="EMBL" id="BC107171">
    <property type="protein sequence ID" value="AAI07172.1"/>
    <property type="molecule type" value="mRNA"/>
</dbReference>
<dbReference type="EMBL" id="S79349">
    <property type="protein sequence ID" value="AAB35380.2"/>
    <property type="molecule type" value="Genomic_DNA"/>
</dbReference>
<dbReference type="CCDS" id="CCDS30722.1">
    <molecule id="P49895-4"/>
</dbReference>
<dbReference type="CCDS" id="CCDS41339.1">
    <molecule id="P49895-1"/>
</dbReference>
<dbReference type="CCDS" id="CCDS41340.1">
    <molecule id="P49895-5"/>
</dbReference>
<dbReference type="CCDS" id="CCDS53320.1">
    <molecule id="P49895-2"/>
</dbReference>
<dbReference type="CCDS" id="CCDS81328.1">
    <molecule id="P49895-7"/>
</dbReference>
<dbReference type="RefSeq" id="NP_000783.2">
    <molecule id="P49895-1"/>
    <property type="nucleotide sequence ID" value="NM_000792.6"/>
</dbReference>
<dbReference type="RefSeq" id="NP_001034804.1">
    <molecule id="P49895-4"/>
    <property type="nucleotide sequence ID" value="NM_001039715.3"/>
</dbReference>
<dbReference type="RefSeq" id="NP_001034805.1">
    <molecule id="P49895-5"/>
    <property type="nucleotide sequence ID" value="NM_001039716.3"/>
</dbReference>
<dbReference type="RefSeq" id="NP_001311245.1">
    <molecule id="P49895-7"/>
    <property type="nucleotide sequence ID" value="NM_001324316.2"/>
</dbReference>
<dbReference type="RefSeq" id="NP_998758.1">
    <molecule id="P49895-2"/>
    <property type="nucleotide sequence ID" value="NM_213593.5"/>
</dbReference>
<dbReference type="BioGRID" id="108077">
    <property type="interactions" value="1"/>
</dbReference>
<dbReference type="CORUM" id="P49895"/>
<dbReference type="FunCoup" id="P49895">
    <property type="interactions" value="649"/>
</dbReference>
<dbReference type="STRING" id="9606.ENSP00000354643"/>
<dbReference type="ChEMBL" id="CHEMBL2019"/>
<dbReference type="DrugBank" id="DB00550">
    <property type="generic name" value="Propylthiouracil"/>
</dbReference>
<dbReference type="DrugBank" id="DB09100">
    <property type="generic name" value="Thyroid, porcine"/>
</dbReference>
<dbReference type="DrugCentral" id="P49895"/>
<dbReference type="iPTMnet" id="P49895"/>
<dbReference type="PhosphoSitePlus" id="P49895"/>
<dbReference type="BioMuta" id="DIO1"/>
<dbReference type="DMDM" id="182702125"/>
<dbReference type="jPOST" id="P49895"/>
<dbReference type="MassIVE" id="P49895"/>
<dbReference type="PaxDb" id="9606-ENSP00000354643"/>
<dbReference type="PeptideAtlas" id="P49895"/>
<dbReference type="ProteomicsDB" id="56164">
    <molecule id="P49895-1"/>
</dbReference>
<dbReference type="ProteomicsDB" id="56165">
    <molecule id="P49895-2"/>
</dbReference>
<dbReference type="ProteomicsDB" id="56166">
    <molecule id="P49895-3"/>
</dbReference>
<dbReference type="ProteomicsDB" id="56167">
    <molecule id="P49895-4"/>
</dbReference>
<dbReference type="ProteomicsDB" id="56168">
    <molecule id="P49895-5"/>
</dbReference>
<dbReference type="ProteomicsDB" id="56170">
    <molecule id="P49895-7"/>
</dbReference>
<dbReference type="ProteomicsDB" id="56171">
    <molecule id="P49895-8"/>
</dbReference>
<dbReference type="ProteomicsDB" id="56172">
    <molecule id="P49895-9"/>
</dbReference>
<dbReference type="Antibodypedia" id="33120">
    <property type="antibodies" value="119 antibodies from 24 providers"/>
</dbReference>
<dbReference type="DNASU" id="1733"/>
<dbReference type="Ensembl" id="ENST00000322679.10">
    <molecule id="P49895-5"/>
    <property type="protein sequence ID" value="ENSP00000323198.6"/>
    <property type="gene ID" value="ENSG00000211452.12"/>
</dbReference>
<dbReference type="Ensembl" id="ENST00000361921.8">
    <molecule id="P49895-1"/>
    <property type="protein sequence ID" value="ENSP00000354643.4"/>
    <property type="gene ID" value="ENSG00000211452.12"/>
</dbReference>
<dbReference type="Ensembl" id="ENST00000388876.3">
    <molecule id="P49895-4"/>
    <property type="protein sequence ID" value="ENSP00000373528.3"/>
    <property type="gene ID" value="ENSG00000211452.12"/>
</dbReference>
<dbReference type="Ensembl" id="ENST00000525202.5">
    <molecule id="P49895-2"/>
    <property type="protein sequence ID" value="ENSP00000435725.1"/>
    <property type="gene ID" value="ENSG00000211452.12"/>
</dbReference>
<dbReference type="Ensembl" id="ENST00000532493.5">
    <molecule id="P49895-7"/>
    <property type="protein sequence ID" value="ENSP00000434758.1"/>
    <property type="gene ID" value="ENSG00000211452.12"/>
</dbReference>
<dbReference type="GeneID" id="1733"/>
<dbReference type="KEGG" id="hsa:1733"/>
<dbReference type="MANE-Select" id="ENST00000361921.8">
    <property type="protein sequence ID" value="ENSP00000354643.4"/>
    <property type="RefSeq nucleotide sequence ID" value="NM_000792.7"/>
    <property type="RefSeq protein sequence ID" value="NP_000783.2"/>
</dbReference>
<dbReference type="UCSC" id="uc001cwb.4">
    <molecule id="P49895-1"/>
    <property type="organism name" value="human"/>
</dbReference>
<dbReference type="AGR" id="HGNC:2883"/>
<dbReference type="CTD" id="1733"/>
<dbReference type="DisGeNET" id="1733"/>
<dbReference type="GeneCards" id="DIO1"/>
<dbReference type="HGNC" id="HGNC:2883">
    <property type="gene designation" value="DIO1"/>
</dbReference>
<dbReference type="HPA" id="ENSG00000211452">
    <property type="expression patterns" value="Group enriched (kidney, liver, thyroid gland)"/>
</dbReference>
<dbReference type="MalaCards" id="DIO1"/>
<dbReference type="MIM" id="147892">
    <property type="type" value="gene"/>
</dbReference>
<dbReference type="MIM" id="619855">
    <property type="type" value="phenotype"/>
</dbReference>
<dbReference type="neXtProt" id="NX_P49895"/>
<dbReference type="OpenTargets" id="ENSG00000211452"/>
<dbReference type="PharmGKB" id="PA27337"/>
<dbReference type="VEuPathDB" id="HostDB:ENSG00000211452"/>
<dbReference type="eggNOG" id="ENOG502QUGZ">
    <property type="taxonomic scope" value="Eukaryota"/>
</dbReference>
<dbReference type="GeneTree" id="ENSGT00940000154482"/>
<dbReference type="HOGENOM" id="CLU_089345_2_0_1"/>
<dbReference type="InParanoid" id="P49895"/>
<dbReference type="OMA" id="TFGSCTX"/>
<dbReference type="OrthoDB" id="428577at2759"/>
<dbReference type="PAN-GO" id="P49895">
    <property type="GO annotations" value="2 GO annotations based on evolutionary models"/>
</dbReference>
<dbReference type="PhylomeDB" id="P49895"/>
<dbReference type="TreeFam" id="TF329721"/>
<dbReference type="BRENDA" id="1.21.99.4">
    <property type="organism ID" value="2681"/>
</dbReference>
<dbReference type="PathwayCommons" id="P49895"/>
<dbReference type="Reactome" id="R-HSA-350864">
    <property type="pathway name" value="Regulation of thyroid hormone activity"/>
</dbReference>
<dbReference type="SABIO-RK" id="P49895"/>
<dbReference type="SIGNOR" id="P49895"/>
<dbReference type="BioGRID-ORCS" id="1733">
    <property type="hits" value="10 hits in 1143 CRISPR screens"/>
</dbReference>
<dbReference type="ChiTaRS" id="DIO1">
    <property type="organism name" value="human"/>
</dbReference>
<dbReference type="GenomeRNAi" id="1733"/>
<dbReference type="Pharos" id="P49895">
    <property type="development level" value="Tclin"/>
</dbReference>
<dbReference type="PRO" id="PR:P49895"/>
<dbReference type="Proteomes" id="UP000005640">
    <property type="component" value="Chromosome 1"/>
</dbReference>
<dbReference type="RNAct" id="P49895">
    <property type="molecule type" value="protein"/>
</dbReference>
<dbReference type="Bgee" id="ENSG00000211452">
    <property type="expression patterns" value="Expressed in right lobe of thyroid gland and 108 other cell types or tissues"/>
</dbReference>
<dbReference type="ExpressionAtlas" id="P49895">
    <property type="expression patterns" value="baseline and differential"/>
</dbReference>
<dbReference type="GO" id="GO:0016323">
    <property type="term" value="C:basolateral plasma membrane"/>
    <property type="evidence" value="ECO:0007669"/>
    <property type="project" value="UniProtKB-SubCell"/>
</dbReference>
<dbReference type="GO" id="GO:0005789">
    <property type="term" value="C:endoplasmic reticulum membrane"/>
    <property type="evidence" value="ECO:0007669"/>
    <property type="project" value="UniProtKB-SubCell"/>
</dbReference>
<dbReference type="GO" id="GO:0005886">
    <property type="term" value="C:plasma membrane"/>
    <property type="evidence" value="ECO:0000304"/>
    <property type="project" value="Reactome"/>
</dbReference>
<dbReference type="GO" id="GO:0008430">
    <property type="term" value="F:selenium binding"/>
    <property type="evidence" value="ECO:0000304"/>
    <property type="project" value="ProtInc"/>
</dbReference>
<dbReference type="GO" id="GO:0004800">
    <property type="term" value="F:thyroxine 5'-deiodinase activity"/>
    <property type="evidence" value="ECO:0000314"/>
    <property type="project" value="UniProtKB"/>
</dbReference>
<dbReference type="GO" id="GO:0033798">
    <property type="term" value="F:thyroxine 5-deiodinase activity"/>
    <property type="evidence" value="ECO:0000314"/>
    <property type="project" value="UniProtKB"/>
</dbReference>
<dbReference type="GO" id="GO:0006520">
    <property type="term" value="P:amino acid metabolic process"/>
    <property type="evidence" value="ECO:0000316"/>
    <property type="project" value="ARUK-UCL"/>
</dbReference>
<dbReference type="GO" id="GO:0042446">
    <property type="term" value="P:hormone biosynthetic process"/>
    <property type="evidence" value="ECO:0007669"/>
    <property type="project" value="UniProtKB-KW"/>
</dbReference>
<dbReference type="GO" id="GO:0042404">
    <property type="term" value="P:thyroid hormone catabolic process"/>
    <property type="evidence" value="ECO:0000314"/>
    <property type="project" value="UniProtKB"/>
</dbReference>
<dbReference type="GO" id="GO:0006590">
    <property type="term" value="P:thyroid hormone generation"/>
    <property type="evidence" value="ECO:0000304"/>
    <property type="project" value="ProtInc"/>
</dbReference>
<dbReference type="GO" id="GO:0042403">
    <property type="term" value="P:thyroid hormone metabolic process"/>
    <property type="evidence" value="ECO:0000318"/>
    <property type="project" value="GO_Central"/>
</dbReference>
<dbReference type="FunFam" id="3.40.30.10:FF:000192">
    <property type="entry name" value="Iodothyronine deiodinase"/>
    <property type="match status" value="1"/>
</dbReference>
<dbReference type="Gene3D" id="3.40.30.10">
    <property type="entry name" value="Glutaredoxin"/>
    <property type="match status" value="1"/>
</dbReference>
<dbReference type="InterPro" id="IPR000643">
    <property type="entry name" value="Iodothyronine_deiodinase"/>
</dbReference>
<dbReference type="InterPro" id="IPR008261">
    <property type="entry name" value="Iodothyronine_deiodinase_AS"/>
</dbReference>
<dbReference type="InterPro" id="IPR027252">
    <property type="entry name" value="Iodothyronine_deiodinase_I/III"/>
</dbReference>
<dbReference type="InterPro" id="IPR036249">
    <property type="entry name" value="Thioredoxin-like_sf"/>
</dbReference>
<dbReference type="PANTHER" id="PTHR11781">
    <property type="entry name" value="IODOTHYRONINE DEIODINASE"/>
    <property type="match status" value="1"/>
</dbReference>
<dbReference type="PANTHER" id="PTHR11781:SF22">
    <property type="entry name" value="TYPE I IODOTHYRONINE DEIODINASE"/>
    <property type="match status" value="1"/>
</dbReference>
<dbReference type="Pfam" id="PF00837">
    <property type="entry name" value="T4_deiodinase"/>
    <property type="match status" value="1"/>
</dbReference>
<dbReference type="PIRSF" id="PIRSF001330">
    <property type="entry name" value="IOD"/>
    <property type="match status" value="1"/>
</dbReference>
<dbReference type="PIRSF" id="PIRSF500144">
    <property type="entry name" value="IODI_III"/>
    <property type="match status" value="1"/>
</dbReference>
<dbReference type="SUPFAM" id="SSF52833">
    <property type="entry name" value="Thioredoxin-like"/>
    <property type="match status" value="1"/>
</dbReference>
<dbReference type="PROSITE" id="PS01205">
    <property type="entry name" value="T4_DEIODINASE"/>
    <property type="match status" value="1"/>
</dbReference>
<reference key="1">
    <citation type="journal article" date="1992" name="J. Clin. Endocrinol. Metab.">
        <title>Cloning and in vitro expression of the human selenoprotein, type I iodothyronine deiodinase.</title>
        <authorList>
            <person name="Mandel S.J."/>
            <person name="Berry M.J."/>
            <person name="Kieffer J.D."/>
            <person name="Harney J.W."/>
            <person name="Warne R.L."/>
            <person name="Larsen P.R."/>
        </authorList>
    </citation>
    <scope>NUCLEOTIDE SEQUENCE [MRNA] (ISOFORM 1)</scope>
</reference>
<reference key="2">
    <citation type="submission" date="2004-02" db="EMBL/GenBank/DDBJ databases">
        <title>Type I iodothyronine deiodinase splice variants in human liver.</title>
        <authorList>
            <person name="Wassen F.J.W.S."/>
            <person name="Kuiper G.G.J.M."/>
            <person name="Visser T.J."/>
        </authorList>
    </citation>
    <scope>NUCLEOTIDE SEQUENCE [MRNA] (ISOFORMS 1; 2; 3; 4; 5; 6; 7; 8 AND 9)</scope>
    <source>
        <tissue>Liver</tissue>
    </source>
</reference>
<reference key="3">
    <citation type="journal article" date="2006" name="Nature">
        <title>The DNA sequence and biological annotation of human chromosome 1.</title>
        <authorList>
            <person name="Gregory S.G."/>
            <person name="Barlow K.F."/>
            <person name="McLay K.E."/>
            <person name="Kaul R."/>
            <person name="Swarbreck D."/>
            <person name="Dunham A."/>
            <person name="Scott C.E."/>
            <person name="Howe K.L."/>
            <person name="Woodfine K."/>
            <person name="Spencer C.C.A."/>
            <person name="Jones M.C."/>
            <person name="Gillson C."/>
            <person name="Searle S."/>
            <person name="Zhou Y."/>
            <person name="Kokocinski F."/>
            <person name="McDonald L."/>
            <person name="Evans R."/>
            <person name="Phillips K."/>
            <person name="Atkinson A."/>
            <person name="Cooper R."/>
            <person name="Jones C."/>
            <person name="Hall R.E."/>
            <person name="Andrews T.D."/>
            <person name="Lloyd C."/>
            <person name="Ainscough R."/>
            <person name="Almeida J.P."/>
            <person name="Ambrose K.D."/>
            <person name="Anderson F."/>
            <person name="Andrew R.W."/>
            <person name="Ashwell R.I.S."/>
            <person name="Aubin K."/>
            <person name="Babbage A.K."/>
            <person name="Bagguley C.L."/>
            <person name="Bailey J."/>
            <person name="Beasley H."/>
            <person name="Bethel G."/>
            <person name="Bird C.P."/>
            <person name="Bray-Allen S."/>
            <person name="Brown J.Y."/>
            <person name="Brown A.J."/>
            <person name="Buckley D."/>
            <person name="Burton J."/>
            <person name="Bye J."/>
            <person name="Carder C."/>
            <person name="Chapman J.C."/>
            <person name="Clark S.Y."/>
            <person name="Clarke G."/>
            <person name="Clee C."/>
            <person name="Cobley V."/>
            <person name="Collier R.E."/>
            <person name="Corby N."/>
            <person name="Coville G.J."/>
            <person name="Davies J."/>
            <person name="Deadman R."/>
            <person name="Dunn M."/>
            <person name="Earthrowl M."/>
            <person name="Ellington A.G."/>
            <person name="Errington H."/>
            <person name="Frankish A."/>
            <person name="Frankland J."/>
            <person name="French L."/>
            <person name="Garner P."/>
            <person name="Garnett J."/>
            <person name="Gay L."/>
            <person name="Ghori M.R.J."/>
            <person name="Gibson R."/>
            <person name="Gilby L.M."/>
            <person name="Gillett W."/>
            <person name="Glithero R.J."/>
            <person name="Grafham D.V."/>
            <person name="Griffiths C."/>
            <person name="Griffiths-Jones S."/>
            <person name="Grocock R."/>
            <person name="Hammond S."/>
            <person name="Harrison E.S.I."/>
            <person name="Hart E."/>
            <person name="Haugen E."/>
            <person name="Heath P.D."/>
            <person name="Holmes S."/>
            <person name="Holt K."/>
            <person name="Howden P.J."/>
            <person name="Hunt A.R."/>
            <person name="Hunt S.E."/>
            <person name="Hunter G."/>
            <person name="Isherwood J."/>
            <person name="James R."/>
            <person name="Johnson C."/>
            <person name="Johnson D."/>
            <person name="Joy A."/>
            <person name="Kay M."/>
            <person name="Kershaw J.K."/>
            <person name="Kibukawa M."/>
            <person name="Kimberley A.M."/>
            <person name="King A."/>
            <person name="Knights A.J."/>
            <person name="Lad H."/>
            <person name="Laird G."/>
            <person name="Lawlor S."/>
            <person name="Leongamornlert D.A."/>
            <person name="Lloyd D.M."/>
            <person name="Loveland J."/>
            <person name="Lovell J."/>
            <person name="Lush M.J."/>
            <person name="Lyne R."/>
            <person name="Martin S."/>
            <person name="Mashreghi-Mohammadi M."/>
            <person name="Matthews L."/>
            <person name="Matthews N.S.W."/>
            <person name="McLaren S."/>
            <person name="Milne S."/>
            <person name="Mistry S."/>
            <person name="Moore M.J.F."/>
            <person name="Nickerson T."/>
            <person name="O'Dell C.N."/>
            <person name="Oliver K."/>
            <person name="Palmeiri A."/>
            <person name="Palmer S.A."/>
            <person name="Parker A."/>
            <person name="Patel D."/>
            <person name="Pearce A.V."/>
            <person name="Peck A.I."/>
            <person name="Pelan S."/>
            <person name="Phelps K."/>
            <person name="Phillimore B.J."/>
            <person name="Plumb R."/>
            <person name="Rajan J."/>
            <person name="Raymond C."/>
            <person name="Rouse G."/>
            <person name="Saenphimmachak C."/>
            <person name="Sehra H.K."/>
            <person name="Sheridan E."/>
            <person name="Shownkeen R."/>
            <person name="Sims S."/>
            <person name="Skuce C.D."/>
            <person name="Smith M."/>
            <person name="Steward C."/>
            <person name="Subramanian S."/>
            <person name="Sycamore N."/>
            <person name="Tracey A."/>
            <person name="Tromans A."/>
            <person name="Van Helmond Z."/>
            <person name="Wall M."/>
            <person name="Wallis J.M."/>
            <person name="White S."/>
            <person name="Whitehead S.L."/>
            <person name="Wilkinson J.E."/>
            <person name="Willey D.L."/>
            <person name="Williams H."/>
            <person name="Wilming L."/>
            <person name="Wray P.W."/>
            <person name="Wu Z."/>
            <person name="Coulson A."/>
            <person name="Vaudin M."/>
            <person name="Sulston J.E."/>
            <person name="Durbin R.M."/>
            <person name="Hubbard T."/>
            <person name="Wooster R."/>
            <person name="Dunham I."/>
            <person name="Carter N.P."/>
            <person name="McVean G."/>
            <person name="Ross M.T."/>
            <person name="Harrow J."/>
            <person name="Olson M.V."/>
            <person name="Beck S."/>
            <person name="Rogers J."/>
            <person name="Bentley D.R."/>
        </authorList>
    </citation>
    <scope>NUCLEOTIDE SEQUENCE [LARGE SCALE GENOMIC DNA]</scope>
</reference>
<reference key="4">
    <citation type="journal article" date="2004" name="Genome Res.">
        <title>The status, quality, and expansion of the NIH full-length cDNA project: the Mammalian Gene Collection (MGC).</title>
        <authorList>
            <consortium name="The MGC Project Team"/>
        </authorList>
    </citation>
    <scope>NUCLEOTIDE SEQUENCE [LARGE SCALE MRNA] (ISOFORMS 1 AND 5)</scope>
    <source>
        <tissue>Kidney</tissue>
    </source>
</reference>
<reference key="5">
    <citation type="journal article" date="1995" name="Mol. Cell. Biol.">
        <title>A novel retinoid X receptor-independent thyroid hormone response element is present in the human type 1 deiodinase gene.</title>
        <authorList>
            <person name="Toyoda N."/>
            <person name="Zavacki A.M."/>
            <person name="Maia A.L."/>
            <person name="Harney J.W."/>
            <person name="Larsen P.R."/>
        </authorList>
    </citation>
    <scope>NUCLEOTIDE SEQUENCE [GENOMIC DNA] OF 1-25</scope>
</reference>
<reference key="6">
    <citation type="journal article" date="2003" name="Endocrinology">
        <title>In vivo dimerization of types 1, 2, and 3 iodothyronine selenodeiodinases.</title>
        <authorList>
            <person name="Curcio-Morelli C."/>
            <person name="Gereben B."/>
            <person name="Zavacki A.M."/>
            <person name="Kim B.W."/>
            <person name="Huang S."/>
            <person name="Harney J.W."/>
            <person name="Larsen P.R."/>
            <person name="Bianco A.C."/>
        </authorList>
    </citation>
    <scope>FUNCTION</scope>
    <scope>CATALYTIC ACTIVITY</scope>
    <scope>SUBUNIT</scope>
</reference>
<reference key="7">
    <citation type="journal article" date="2008" name="Endocrinology">
        <title>Thyronamines are isozyme-specific substrates of deiodinases.</title>
        <authorList>
            <person name="Piehl S."/>
            <person name="Heberer T."/>
            <person name="Balizs G."/>
            <person name="Scanlan T.S."/>
            <person name="Smits R."/>
            <person name="Koksch B."/>
            <person name="Koehrle J."/>
        </authorList>
    </citation>
    <scope>FUNCTION</scope>
    <scope>CATALYTIC ACTIVITY</scope>
    <scope>BIOPHYSICOCHEMICAL PROPERTIES</scope>
    <scope>ACTIVITY REGULATION</scope>
</reference>
<reference key="8">
    <citation type="journal article" date="2008" name="Rapid Commun. Mass Spectrom.">
        <title>Development of a validated liquid chromatography/tandem mass spectrometry method for the distinction of thyronine and thyronamine constitutional isomers and for the identification of new deiodinase substrates.</title>
        <authorList>
            <person name="Piehl S."/>
            <person name="Heberer T."/>
            <person name="Balizs G."/>
            <person name="Scanlan T.S."/>
            <person name="Koehrle J."/>
        </authorList>
    </citation>
    <scope>FUNCTION</scope>
    <scope>CATALYTIC ACTIVITY</scope>
</reference>
<reference key="9">
    <citation type="journal article" date="2021" name="Thyroid">
        <title>Human Type 1 Iodothyronine Deiodinase (DIO1) Mutations Cause Abnormal Thyroid Hormone Metabolism.</title>
        <authorList>
            <person name="Franca M.M."/>
            <person name="German A."/>
            <person name="Fernandes G.W."/>
            <person name="Liao X.H."/>
            <person name="Bianco A.C."/>
            <person name="Refetoff S."/>
            <person name="Dumitrescu A.M."/>
        </authorList>
    </citation>
    <scope>INVOLVEMENT IN THMA2</scope>
    <scope>VARIANTS THMA2 LYS-94 AND ILE-201</scope>
    <scope>FUNCTION</scope>
    <scope>BIOPHYSICOCHEMICAL PROPERTIES</scope>
    <scope>CATALYTIC ACTIVITY</scope>
</reference>
<evidence type="ECO:0000250" key="1">
    <source>
        <dbReference type="UniProtKB" id="P24389"/>
    </source>
</evidence>
<evidence type="ECO:0000250" key="2">
    <source>
        <dbReference type="UniProtKB" id="Q2QEI3"/>
    </source>
</evidence>
<evidence type="ECO:0000250" key="3">
    <source>
        <dbReference type="UniProtKB" id="Q61153"/>
    </source>
</evidence>
<evidence type="ECO:0000255" key="4"/>
<evidence type="ECO:0000255" key="5">
    <source>
        <dbReference type="PROSITE-ProRule" id="PRU10107"/>
    </source>
</evidence>
<evidence type="ECO:0000269" key="6">
    <source>
    </source>
</evidence>
<evidence type="ECO:0000269" key="7">
    <source>
    </source>
</evidence>
<evidence type="ECO:0000269" key="8">
    <source>
    </source>
</evidence>
<evidence type="ECO:0000269" key="9">
    <source>
    </source>
</evidence>
<evidence type="ECO:0000303" key="10">
    <source>
    </source>
</evidence>
<evidence type="ECO:0000303" key="11">
    <source ref="2"/>
</evidence>
<evidence type="ECO:0000305" key="12"/>
<evidence type="ECO:0000305" key="13">
    <source>
    </source>
</evidence>
<evidence type="ECO:0000305" key="14">
    <source>
    </source>
</evidence>
<evidence type="ECO:0000305" key="15">
    <source>
    </source>
</evidence>
<evidence type="ECO:0000305" key="16">
    <source>
    </source>
</evidence>
<proteinExistence type="evidence at protein level"/>
<comment type="function">
    <text evidence="1 2 3 6 7 8 9">Plays a crucial role in the metabolism of thyroid hormones (TH) and has specific roles in TH activation and inactivation by deiodination (PubMed:12586771, PubMed:32718224, PubMed:18821722). Catalyzes the deiodination of L-thyroxine (T4) to 3,5,3'-triiodothyronine (T3), 3,3',5'-triiodothyronine (rT3) to 3,3'-diiodothyronine (3,3'-T2) and 3',5'-diiodothyronine (3',5'-T2) to 3'-monoiodothyronine (3'-T1) via outer-ring deiodination (ORD) (PubMed:32718224, PubMed:18821722, PubMed:12586771, PubMed:18339710). Catalyzes the deiodination of T4 to 3,3',5'-triiodothyronine (rT3) via inner-ring deiodination (IRD) (PubMed:32718224). Catalyzes the deiodination of T3 to 3,3'-T2, 3,5-diiodothyronine (3,5-T2) to 3- monoiodothyronine (3-T1) and 3,3'-T2 to 3-T1 via IRD (By similarity). Catalyzes the phenolic ring deiodinations of 3,3',5'-triiodothyronamine and 3',5'-diiodothyronamine (PubMed:18339710). Catalyzes the phenolic ring deiodination of 3,3'-diiodothyronamine and tyrosyl ring deiodinations of 3,5,3'-triiodothyronamine and 3,5-diiodothyronamine (By similarity). Catalyzes the deiodination of L-thyroxine sulfate and 3,3',5-triiodo-L-thyronine sulfate via IRD and of 3,3',5'-triiodo-L-thyronine sulfate via ORD (By similarity).</text>
</comment>
<comment type="catalytic activity">
    <reaction evidence="5 8 9">
        <text>3,3',5-triiodo-L-thyronine + iodide + A + H(+) = L-thyroxine + AH2</text>
        <dbReference type="Rhea" id="RHEA:19745"/>
        <dbReference type="ChEBI" id="CHEBI:13193"/>
        <dbReference type="ChEBI" id="CHEBI:15378"/>
        <dbReference type="ChEBI" id="CHEBI:16382"/>
        <dbReference type="ChEBI" id="CHEBI:17499"/>
        <dbReference type="ChEBI" id="CHEBI:58448"/>
        <dbReference type="ChEBI" id="CHEBI:533015"/>
        <dbReference type="EC" id="1.21.99.4"/>
    </reaction>
    <physiologicalReaction direction="right-to-left" evidence="9">
        <dbReference type="Rhea" id="RHEA:19747"/>
    </physiologicalReaction>
</comment>
<comment type="catalytic activity">
    <reaction evidence="9">
        <text>3,3',5'-triiodo-L-thyronine + iodide + A + H(+) = L-thyroxine + AH2</text>
        <dbReference type="Rhea" id="RHEA:18897"/>
        <dbReference type="ChEBI" id="CHEBI:13193"/>
        <dbReference type="ChEBI" id="CHEBI:15378"/>
        <dbReference type="ChEBI" id="CHEBI:16382"/>
        <dbReference type="ChEBI" id="CHEBI:17499"/>
        <dbReference type="ChEBI" id="CHEBI:57261"/>
        <dbReference type="ChEBI" id="CHEBI:58448"/>
        <dbReference type="EC" id="1.21.99.3"/>
    </reaction>
    <physiologicalReaction direction="right-to-left" evidence="16">
        <dbReference type="Rhea" id="RHEA:18899"/>
    </physiologicalReaction>
</comment>
<comment type="catalytic activity">
    <reaction evidence="6 7 8">
        <text>3,3'-diiodo-L-thyronine + iodide + A + H(+) = 3,3',5'-triiodo-L-thyronine + AH2</text>
        <dbReference type="Rhea" id="RHEA:82575"/>
        <dbReference type="ChEBI" id="CHEBI:13193"/>
        <dbReference type="ChEBI" id="CHEBI:15378"/>
        <dbReference type="ChEBI" id="CHEBI:16382"/>
        <dbReference type="ChEBI" id="CHEBI:17499"/>
        <dbReference type="ChEBI" id="CHEBI:57261"/>
        <dbReference type="ChEBI" id="CHEBI:176514"/>
    </reaction>
    <physiologicalReaction direction="right-to-left" evidence="13">
        <dbReference type="Rhea" id="RHEA:82577"/>
    </physiologicalReaction>
</comment>
<comment type="catalytic activity">
    <reaction evidence="2">
        <text>3,3'-diiodo-L-thyronine + iodide + A + H(+) = 3,3',5-triiodo-L-thyronine + AH2</text>
        <dbReference type="Rhea" id="RHEA:82571"/>
        <dbReference type="ChEBI" id="CHEBI:13193"/>
        <dbReference type="ChEBI" id="CHEBI:15378"/>
        <dbReference type="ChEBI" id="CHEBI:16382"/>
        <dbReference type="ChEBI" id="CHEBI:17499"/>
        <dbReference type="ChEBI" id="CHEBI:176514"/>
        <dbReference type="ChEBI" id="CHEBI:533015"/>
    </reaction>
    <physiologicalReaction direction="right-to-left" evidence="2">
        <dbReference type="Rhea" id="RHEA:82573"/>
    </physiologicalReaction>
</comment>
<comment type="catalytic activity">
    <reaction evidence="8">
        <text>3'-iodo-L-thyronine + iodide + A + H(+) = 3',5'-diiodo-L-thyronine + AH2</text>
        <dbReference type="Rhea" id="RHEA:82899"/>
        <dbReference type="ChEBI" id="CHEBI:13193"/>
        <dbReference type="ChEBI" id="CHEBI:15378"/>
        <dbReference type="ChEBI" id="CHEBI:16382"/>
        <dbReference type="ChEBI" id="CHEBI:17499"/>
        <dbReference type="ChEBI" id="CHEBI:195762"/>
        <dbReference type="ChEBI" id="CHEBI:232695"/>
    </reaction>
    <physiologicalReaction direction="right-to-left" evidence="15">
        <dbReference type="Rhea" id="RHEA:82901"/>
    </physiologicalReaction>
</comment>
<comment type="catalytic activity">
    <reaction evidence="3">
        <text>3-iodo-L-thyronine + iodide + A + H(+) = 3,5-diiodo-L-thyronine + AH2</text>
        <dbReference type="Rhea" id="RHEA:82895"/>
        <dbReference type="ChEBI" id="CHEBI:13193"/>
        <dbReference type="ChEBI" id="CHEBI:15378"/>
        <dbReference type="ChEBI" id="CHEBI:16382"/>
        <dbReference type="ChEBI" id="CHEBI:17499"/>
        <dbReference type="ChEBI" id="CHEBI:232626"/>
        <dbReference type="ChEBI" id="CHEBI:232627"/>
    </reaction>
    <physiologicalReaction direction="right-to-left" evidence="3">
        <dbReference type="Rhea" id="RHEA:82897"/>
    </physiologicalReaction>
</comment>
<comment type="catalytic activity">
    <reaction evidence="3">
        <text>3-iodo-L-thyronine + iodide + A + H(+) = 3,3'-diiodo-L-thyronine + AH2</text>
        <dbReference type="Rhea" id="RHEA:83783"/>
        <dbReference type="ChEBI" id="CHEBI:13193"/>
        <dbReference type="ChEBI" id="CHEBI:15378"/>
        <dbReference type="ChEBI" id="CHEBI:16382"/>
        <dbReference type="ChEBI" id="CHEBI:17499"/>
        <dbReference type="ChEBI" id="CHEBI:176514"/>
        <dbReference type="ChEBI" id="CHEBI:232627"/>
    </reaction>
    <physiologicalReaction direction="right-to-left" evidence="3">
        <dbReference type="Rhea" id="RHEA:83785"/>
    </physiologicalReaction>
</comment>
<comment type="catalytic activity">
    <reaction evidence="7">
        <text>3,3'-diiodothyronamine + iodide + A + H(+) = 3,3',5'-triiodothyronamine + AH2</text>
        <dbReference type="Rhea" id="RHEA:83795"/>
        <dbReference type="ChEBI" id="CHEBI:13193"/>
        <dbReference type="ChEBI" id="CHEBI:15378"/>
        <dbReference type="ChEBI" id="CHEBI:16382"/>
        <dbReference type="ChEBI" id="CHEBI:17499"/>
        <dbReference type="ChEBI" id="CHEBI:233341"/>
        <dbReference type="ChEBI" id="CHEBI:233343"/>
    </reaction>
    <physiologicalReaction direction="right-to-left" evidence="14">
        <dbReference type="Rhea" id="RHEA:83797"/>
    </physiologicalReaction>
</comment>
<comment type="catalytic activity">
    <reaction evidence="7">
        <text>3'-iodothyronamine + iodide + A + H(+) = 3',5'-diiodothyronamine + AH2</text>
        <dbReference type="Rhea" id="RHEA:83803"/>
        <dbReference type="ChEBI" id="CHEBI:13193"/>
        <dbReference type="ChEBI" id="CHEBI:15378"/>
        <dbReference type="ChEBI" id="CHEBI:16382"/>
        <dbReference type="ChEBI" id="CHEBI:17499"/>
        <dbReference type="ChEBI" id="CHEBI:233339"/>
        <dbReference type="ChEBI" id="CHEBI:233342"/>
    </reaction>
    <physiologicalReaction direction="right-to-left" evidence="14">
        <dbReference type="Rhea" id="RHEA:83805"/>
    </physiologicalReaction>
</comment>
<comment type="catalytic activity">
    <reaction evidence="3">
        <text>3-iodothyronamine + iodide + A + H(+) = 3,3'-diiodothyronamine + AH2</text>
        <dbReference type="Rhea" id="RHEA:83827"/>
        <dbReference type="ChEBI" id="CHEBI:13193"/>
        <dbReference type="ChEBI" id="CHEBI:15378"/>
        <dbReference type="ChEBI" id="CHEBI:16382"/>
        <dbReference type="ChEBI" id="CHEBI:17499"/>
        <dbReference type="ChEBI" id="CHEBI:231647"/>
        <dbReference type="ChEBI" id="CHEBI:233341"/>
    </reaction>
    <physiologicalReaction direction="right-to-left" evidence="3">
        <dbReference type="Rhea" id="RHEA:83829"/>
    </physiologicalReaction>
</comment>
<comment type="catalytic activity">
    <reaction evidence="3">
        <text>3,3'-diiodothyronamine + iodide + A + H(+) = 3,3',5-triiodothyronamine + AH2</text>
        <dbReference type="Rhea" id="RHEA:83811"/>
        <dbReference type="ChEBI" id="CHEBI:13193"/>
        <dbReference type="ChEBI" id="CHEBI:15378"/>
        <dbReference type="ChEBI" id="CHEBI:16382"/>
        <dbReference type="ChEBI" id="CHEBI:17499"/>
        <dbReference type="ChEBI" id="CHEBI:233341"/>
        <dbReference type="ChEBI" id="CHEBI:233426"/>
    </reaction>
    <physiologicalReaction direction="right-to-left" evidence="3">
        <dbReference type="Rhea" id="RHEA:83813"/>
    </physiologicalReaction>
</comment>
<comment type="catalytic activity">
    <reaction evidence="3">
        <text>3-iodothyronamine + iodide + A + H(+) = 3,5-diiodothyronamine + AH2</text>
        <dbReference type="Rhea" id="RHEA:83823"/>
        <dbReference type="ChEBI" id="CHEBI:13193"/>
        <dbReference type="ChEBI" id="CHEBI:15378"/>
        <dbReference type="ChEBI" id="CHEBI:16382"/>
        <dbReference type="ChEBI" id="CHEBI:17499"/>
        <dbReference type="ChEBI" id="CHEBI:231647"/>
        <dbReference type="ChEBI" id="CHEBI:233340"/>
    </reaction>
    <physiologicalReaction direction="right-to-left" evidence="3">
        <dbReference type="Rhea" id="RHEA:83825"/>
    </physiologicalReaction>
</comment>
<comment type="catalytic activity">
    <reaction evidence="1">
        <text>3,3'-diiodo-L-thyronine sulfate + iodide + A + H(+) = 3,3',5'-triiodo-L-thyronine sulfate + AH2</text>
        <dbReference type="Rhea" id="RHEA:83831"/>
        <dbReference type="ChEBI" id="CHEBI:13193"/>
        <dbReference type="ChEBI" id="CHEBI:15378"/>
        <dbReference type="ChEBI" id="CHEBI:16382"/>
        <dbReference type="ChEBI" id="CHEBI:17499"/>
        <dbReference type="ChEBI" id="CHEBI:176513"/>
        <dbReference type="ChEBI" id="CHEBI:176515"/>
    </reaction>
    <physiologicalReaction direction="right-to-left" evidence="1">
        <dbReference type="Rhea" id="RHEA:83833"/>
    </physiologicalReaction>
</comment>
<comment type="catalytic activity">
    <reaction evidence="1">
        <text>3,3',5'-triiodo-L-thyronine sulfate + iodide + A + H(+) = L-thyroxine sulfate + AH2</text>
        <dbReference type="Rhea" id="RHEA:83835"/>
        <dbReference type="ChEBI" id="CHEBI:13193"/>
        <dbReference type="ChEBI" id="CHEBI:15378"/>
        <dbReference type="ChEBI" id="CHEBI:16382"/>
        <dbReference type="ChEBI" id="CHEBI:17499"/>
        <dbReference type="ChEBI" id="CHEBI:176512"/>
        <dbReference type="ChEBI" id="CHEBI:176513"/>
    </reaction>
    <physiologicalReaction direction="right-to-left" evidence="1">
        <dbReference type="Rhea" id="RHEA:83837"/>
    </physiologicalReaction>
</comment>
<comment type="catalytic activity">
    <reaction evidence="1">
        <text>3,3'-diiodo-L-thyronine sulfate + iodide + A + H(+) = 3,3',5-triiodo-L-thyronine sulfate + AH2</text>
        <dbReference type="Rhea" id="RHEA:83751"/>
        <dbReference type="ChEBI" id="CHEBI:13193"/>
        <dbReference type="ChEBI" id="CHEBI:15378"/>
        <dbReference type="ChEBI" id="CHEBI:16382"/>
        <dbReference type="ChEBI" id="CHEBI:17499"/>
        <dbReference type="ChEBI" id="CHEBI:176511"/>
        <dbReference type="ChEBI" id="CHEBI:176515"/>
    </reaction>
    <physiologicalReaction direction="right-to-left" evidence="1">
        <dbReference type="Rhea" id="RHEA:83753"/>
    </physiologicalReaction>
</comment>
<comment type="activity regulation">
    <text evidence="7">Deiodination of substrates 3,3',5'-triiodothyronine, 3,3',5'-triiodothyronamine and 3',5'- diiodothyronamine are inhibited by 6n-propyl-2-thiouracil (PTU).</text>
</comment>
<comment type="biophysicochemical properties">
    <kinetics>
        <KM evidence="9">10 uM for L-thyroxine</KM>
        <KM evidence="7">0.59 uM for 3,3',5'-triiodothyronine</KM>
        <KM evidence="7">0.63 uM for 3,3',5'-triiodothyronamine</KM>
        <Vmax evidence="7">2.2 pmol/min/mg enzyme toward 3,3',5'-triiodothyronine</Vmax>
        <Vmax evidence="7">1.5 pmol/min/mg enzyme toward 3,3',5'-triiodothyronamine</Vmax>
    </kinetics>
</comment>
<comment type="subunit">
    <text evidence="6">Predominantly monomer. Can form homodimers but homodimerization is not essential for enzyme activity.</text>
</comment>
<comment type="subcellular location">
    <subcellularLocation>
        <location evidence="1">Cell membrane</location>
        <topology evidence="1">Single-pass type III membrane protein</topology>
    </subcellularLocation>
    <subcellularLocation>
        <location evidence="1">Endoplasmic reticulum membrane</location>
        <topology evidence="1">Single-pass type III membrane protein</topology>
    </subcellularLocation>
    <subcellularLocation>
        <location evidence="1">Basolateral cell membrane</location>
        <topology evidence="1">Single-pass type III membrane protein</topology>
    </subcellularLocation>
</comment>
<comment type="alternative products">
    <event type="alternative splicing"/>
    <isoform>
        <id>P49895-1</id>
        <name>1</name>
        <name>a</name>
        <sequence type="displayed"/>
    </isoform>
    <isoform>
        <id>P49895-2</id>
        <name>2</name>
        <name>b</name>
        <sequence type="described" ref="VSP_012774"/>
    </isoform>
    <isoform>
        <id>P49895-3</id>
        <name>3</name>
        <name>c/f</name>
        <sequence type="described" ref="VSP_012777 VSP_012778"/>
    </isoform>
    <isoform>
        <id>P49895-4</id>
        <name>4</name>
        <name>d</name>
        <sequence type="described" ref="VSP_012781"/>
    </isoform>
    <isoform>
        <id>P49895-5</id>
        <name>5</name>
        <name>e</name>
        <sequence type="described" ref="VSP_012783 VSP_012784"/>
    </isoform>
    <isoform>
        <id>P49895-6</id>
        <name>6</name>
        <name>k</name>
        <sequence type="described" ref="VSP_012772 VSP_012773"/>
    </isoform>
    <isoform>
        <id>P49895-7</id>
        <name>7</name>
        <name>l</name>
        <sequence type="described" ref="VSP_012782"/>
    </isoform>
    <isoform>
        <id>P49895-8</id>
        <name>8</name>
        <name>m</name>
        <sequence type="described" ref="VSP_012775 VSP_012776"/>
    </isoform>
    <isoform>
        <id>P49895-9</id>
        <name>9</name>
        <name>s</name>
        <sequence type="described" ref="VSP_012779 VSP_012780"/>
    </isoform>
</comment>
<comment type="disease" evidence="9">
    <disease id="DI-06406">
        <name>Thyroid hormone metabolism, abnormal, 2</name>
        <acronym>THMA2</acronym>
        <description>An autosomal dominant disorder characterized by slightly increased thyroid-stimulating hormone levels, and elevated serum reverse triiodothyronine (rT3) levels and rT3/T3 ratios.</description>
        <dbReference type="MIM" id="619855"/>
    </disease>
    <text>The disease is caused by variants affecting the gene represented in this entry.</text>
</comment>
<comment type="miscellaneous">
    <molecule>Isoform 3</molecule>
    <text evidence="12">The UGA codon in position 83 may either function as a selenocysteine codon or a translation termination codon.</text>
</comment>
<comment type="miscellaneous">
    <molecule>Isoform 6</molecule>
    <text evidence="12">May be produced at very low levels due to a premature stop codon in the mRNA, leading to nonsense-mediated mRNA decay. The UGA codon in position 34 may either function as a selenocysteine codon or a translation termination codon.</text>
</comment>
<comment type="miscellaneous">
    <molecule>Isoform 8</molecule>
    <text evidence="12">May be produced at very low levels due to a premature stop codon in the mRNA, leading to nonsense-mediated mRNA decay. The UGA codon in position 59 may either function as a selenocysteine codon or a translation termination codon.</text>
</comment>
<comment type="miscellaneous">
    <molecule>Isoform 9</molecule>
    <text evidence="12">May be produced at very low levels due to a premature stop codon in the mRNA, leading to nonsense-mediated mRNA decay. The UGA codon in position 59 may either function as a selenocysteine codon or a translation termination codon.</text>
</comment>
<comment type="similarity">
    <text evidence="12">Belongs to the iodothyronine deiodinase family.</text>
</comment>
<comment type="online information" name="Wikipedia">
    <link uri="https://en.wikipedia.org/wiki/Deiodinase"/>
    <text>Deiodinase entry</text>
</comment>
<feature type="chain" id="PRO_0000154311" description="Type I iodothyronine deiodinase">
    <location>
        <begin position="1"/>
        <end position="249"/>
    </location>
</feature>
<feature type="topological domain" description="Extracellular" evidence="1">
    <location>
        <begin position="1"/>
        <end position="12"/>
    </location>
</feature>
<feature type="transmembrane region" description="Helical; Signal-anchor for type III membrane protein" evidence="4">
    <location>
        <begin position="13"/>
        <end position="33"/>
    </location>
</feature>
<feature type="topological domain" description="Cytoplasmic" evidence="1">
    <location>
        <begin position="34"/>
        <end position="249"/>
    </location>
</feature>
<feature type="active site" evidence="1">
    <location>
        <position position="126"/>
    </location>
</feature>
<feature type="non-standard amino acid" description="Selenocysteine" evidence="1">
    <location>
        <position position="126"/>
    </location>
</feature>
<feature type="splice variant" id="VSP_012772" description="In isoform 6." evidence="11">
    <original>GKVLLILFPDRVKRN</original>
    <variation>APSISGSSURSVGSD</variation>
    <location>
        <begin position="26"/>
        <end position="40"/>
    </location>
</feature>
<feature type="splice variant" id="VSP_012773" description="In isoform 6." evidence="11">
    <location>
        <begin position="41"/>
        <end position="249"/>
    </location>
</feature>
<feature type="splice variant" id="VSP_012774" description="In isoform 2." evidence="11">
    <location>
        <begin position="50"/>
        <end position="113"/>
    </location>
</feature>
<feature type="splice variant" id="VSP_012779" description="In isoform 9." evidence="11">
    <original>MTRNPHFSHDNWIPTFFSTQYFWFVLKVRWQRLEDTTELG</original>
    <variation>PLAATRGHDUARGSGPKLPGGPPLRTEVQHLGVYARWLGF</variation>
    <location>
        <begin position="50"/>
        <end position="89"/>
    </location>
</feature>
<feature type="splice variant" id="VSP_012775" description="In isoform 8." evidence="11">
    <original>MTRNPHFSHDNWIPTFFSTQYFWFVLKVRWQRLEDT</original>
    <variation>PLAATRGHDUARGSGPKLPGGPPLRTEVQHLGVYAR</variation>
    <location>
        <begin position="50"/>
        <end position="85"/>
    </location>
</feature>
<feature type="splice variant" id="VSP_012777" description="In isoform 3." evidence="11">
    <original>RWQRLEDTTELGGLAPNCPVVRLSGQRCNIWE</original>
    <variation>IGHWCUILEVVPDLHLCSNLTSSRGLLKTLVP</variation>
    <location>
        <begin position="78"/>
        <end position="109"/>
    </location>
</feature>
<feature type="splice variant" id="VSP_012776" description="In isoform 8." evidence="11">
    <location>
        <begin position="86"/>
        <end position="249"/>
    </location>
</feature>
<feature type="splice variant" id="VSP_012780" description="In isoform 9." evidence="11">
    <location>
        <begin position="90"/>
        <end position="249"/>
    </location>
</feature>
<feature type="splice variant" id="VSP_012778" description="In isoform 3." evidence="11">
    <location>
        <begin position="110"/>
        <end position="249"/>
    </location>
</feature>
<feature type="splice variant" id="VSP_012781" description="In isoform 4." evidence="11">
    <location>
        <begin position="113"/>
        <end position="160"/>
    </location>
</feature>
<feature type="splice variant" id="VSP_012782" description="In isoform 7." evidence="11">
    <location>
        <begin position="114"/>
        <end position="249"/>
    </location>
</feature>
<feature type="splice variant" id="VSP_012783" description="In isoform 5." evidence="10 11">
    <original>D</original>
    <variation>G</variation>
    <location>
        <position position="161"/>
    </location>
</feature>
<feature type="splice variant" id="VSP_012784" description="In isoform 5." evidence="10 11">
    <location>
        <begin position="162"/>
        <end position="249"/>
    </location>
</feature>
<feature type="sequence variant" id="VAR_087106" description="In THMA2; reduced catalytic activity, due to a 2-fold reduction in T4 substrate affinity; dbSNP:rs754694815." evidence="9">
    <original>N</original>
    <variation>K</variation>
    <location>
        <position position="94"/>
    </location>
</feature>
<feature type="sequence variant" id="VAR_087107" description="In THMA2; reduced catalytic activity, due to a 3-fold reduction in T4 substrate affinity; dbSNP:rs201420507." evidence="9">
    <original>M</original>
    <variation>I</variation>
    <location>
        <position position="201"/>
    </location>
</feature>
<organism>
    <name type="scientific">Homo sapiens</name>
    <name type="common">Human</name>
    <dbReference type="NCBI Taxonomy" id="9606"/>
    <lineage>
        <taxon>Eukaryota</taxon>
        <taxon>Metazoa</taxon>
        <taxon>Chordata</taxon>
        <taxon>Craniata</taxon>
        <taxon>Vertebrata</taxon>
        <taxon>Euteleostomi</taxon>
        <taxon>Mammalia</taxon>
        <taxon>Eutheria</taxon>
        <taxon>Euarchontoglires</taxon>
        <taxon>Primates</taxon>
        <taxon>Haplorrhini</taxon>
        <taxon>Catarrhini</taxon>
        <taxon>Hominidae</taxon>
        <taxon>Homo</taxon>
    </lineage>
</organism>
<name>IOD1_HUMAN</name>
<accession>P49895</accession>
<accession>Q1RN02</accession>
<accession>Q3KNP8</accession>
<accession>Q6Q4C1</accession>
<accession>Q6Q4C2</accession>
<accession>Q6Q4C3</accession>
<accession>Q6Q4C4</accession>
<accession>Q6Q4C5</accession>
<accession>Q6Q4C6</accession>
<accession>Q6Q4C7</accession>
<accession>Q6Q4C9</accession>
<accession>Q8WWC6</accession>
<gene>
    <name type="primary">DIO1</name>
    <name type="synonym">ITDI1</name>
    <name type="synonym">TXDI1</name>
</gene>